<keyword id="KW-0067">ATP-binding</keyword>
<keyword id="KW-0418">Kinase</keyword>
<keyword id="KW-0547">Nucleotide-binding</keyword>
<keyword id="KW-0597">Phosphoprotein</keyword>
<keyword id="KW-1185">Reference proteome</keyword>
<keyword id="KW-0808">Transferase</keyword>
<proteinExistence type="inferred from homology"/>
<protein>
    <recommendedName>
        <fullName evidence="1">Adenylyl-sulfate kinase</fullName>
        <ecNumber evidence="1">2.7.1.25</ecNumber>
    </recommendedName>
    <alternativeName>
        <fullName evidence="1">APS kinase</fullName>
    </alternativeName>
    <alternativeName>
        <fullName evidence="1">ATP adenosine-5'-phosphosulfate 3'-phosphotransferase</fullName>
    </alternativeName>
    <alternativeName>
        <fullName evidence="1">Adenosine-5'-phosphosulfate kinase</fullName>
    </alternativeName>
</protein>
<feature type="chain" id="PRO_1000009008" description="Adenylyl-sulfate kinase">
    <location>
        <begin position="1"/>
        <end position="201"/>
    </location>
</feature>
<feature type="active site" description="Phosphoserine intermediate" evidence="1">
    <location>
        <position position="109"/>
    </location>
</feature>
<feature type="binding site" evidence="1">
    <location>
        <begin position="35"/>
        <end position="42"/>
    </location>
    <ligand>
        <name>ATP</name>
        <dbReference type="ChEBI" id="CHEBI:30616"/>
    </ligand>
</feature>
<reference key="1">
    <citation type="submission" date="2007-08" db="EMBL/GenBank/DDBJ databases">
        <authorList>
            <consortium name="The Citrobacter koseri Genome Sequencing Project"/>
            <person name="McClelland M."/>
            <person name="Sanderson E.K."/>
            <person name="Porwollik S."/>
            <person name="Spieth J."/>
            <person name="Clifton W.S."/>
            <person name="Latreille P."/>
            <person name="Courtney L."/>
            <person name="Wang C."/>
            <person name="Pepin K."/>
            <person name="Bhonagiri V."/>
            <person name="Nash W."/>
            <person name="Johnson M."/>
            <person name="Thiruvilangam P."/>
            <person name="Wilson R."/>
        </authorList>
    </citation>
    <scope>NUCLEOTIDE SEQUENCE [LARGE SCALE GENOMIC DNA]</scope>
    <source>
        <strain>ATCC BAA-895 / CDC 4225-83 / SGSC4696</strain>
    </source>
</reference>
<dbReference type="EC" id="2.7.1.25" evidence="1"/>
<dbReference type="EMBL" id="CP000822">
    <property type="protein sequence ID" value="ABV15177.1"/>
    <property type="molecule type" value="Genomic_DNA"/>
</dbReference>
<dbReference type="RefSeq" id="WP_012134866.1">
    <property type="nucleotide sequence ID" value="NC_009792.1"/>
</dbReference>
<dbReference type="SMR" id="A8ANW4"/>
<dbReference type="STRING" id="290338.CKO_04111"/>
<dbReference type="GeneID" id="45137748"/>
<dbReference type="KEGG" id="cko:CKO_04111"/>
<dbReference type="HOGENOM" id="CLU_046932_1_0_6"/>
<dbReference type="OrthoDB" id="9804504at2"/>
<dbReference type="UniPathway" id="UPA00140">
    <property type="reaction ID" value="UER00205"/>
</dbReference>
<dbReference type="Proteomes" id="UP000008148">
    <property type="component" value="Chromosome"/>
</dbReference>
<dbReference type="GO" id="GO:0004020">
    <property type="term" value="F:adenylylsulfate kinase activity"/>
    <property type="evidence" value="ECO:0007669"/>
    <property type="project" value="UniProtKB-UniRule"/>
</dbReference>
<dbReference type="GO" id="GO:0005524">
    <property type="term" value="F:ATP binding"/>
    <property type="evidence" value="ECO:0007669"/>
    <property type="project" value="UniProtKB-UniRule"/>
</dbReference>
<dbReference type="GO" id="GO:0070814">
    <property type="term" value="P:hydrogen sulfide biosynthetic process"/>
    <property type="evidence" value="ECO:0007669"/>
    <property type="project" value="UniProtKB-UniRule"/>
</dbReference>
<dbReference type="GO" id="GO:0000103">
    <property type="term" value="P:sulfate assimilation"/>
    <property type="evidence" value="ECO:0007669"/>
    <property type="project" value="UniProtKB-UniRule"/>
</dbReference>
<dbReference type="CDD" id="cd02027">
    <property type="entry name" value="APSK"/>
    <property type="match status" value="1"/>
</dbReference>
<dbReference type="FunFam" id="3.40.50.300:FF:000212">
    <property type="entry name" value="Adenylyl-sulfate kinase"/>
    <property type="match status" value="1"/>
</dbReference>
<dbReference type="Gene3D" id="3.40.50.300">
    <property type="entry name" value="P-loop containing nucleotide triphosphate hydrolases"/>
    <property type="match status" value="1"/>
</dbReference>
<dbReference type="HAMAP" id="MF_00065">
    <property type="entry name" value="Adenylyl_sulf_kinase"/>
    <property type="match status" value="1"/>
</dbReference>
<dbReference type="InterPro" id="IPR002891">
    <property type="entry name" value="APS_kinase"/>
</dbReference>
<dbReference type="InterPro" id="IPR027417">
    <property type="entry name" value="P-loop_NTPase"/>
</dbReference>
<dbReference type="NCBIfam" id="TIGR00455">
    <property type="entry name" value="apsK"/>
    <property type="match status" value="1"/>
</dbReference>
<dbReference type="NCBIfam" id="NF003013">
    <property type="entry name" value="PRK03846.1"/>
    <property type="match status" value="1"/>
</dbReference>
<dbReference type="PANTHER" id="PTHR11055:SF63">
    <property type="entry name" value="ADENYLYL-SULFATE KINASE 1, CHLOROPLASTIC"/>
    <property type="match status" value="1"/>
</dbReference>
<dbReference type="PANTHER" id="PTHR11055">
    <property type="entry name" value="BIFUNCTIONAL 3'-PHOSPHOADENOSINE 5'-PHOSPHOSULFATE SYNTHASE"/>
    <property type="match status" value="1"/>
</dbReference>
<dbReference type="Pfam" id="PF01583">
    <property type="entry name" value="APS_kinase"/>
    <property type="match status" value="1"/>
</dbReference>
<dbReference type="SUPFAM" id="SSF52540">
    <property type="entry name" value="P-loop containing nucleoside triphosphate hydrolases"/>
    <property type="match status" value="1"/>
</dbReference>
<organism>
    <name type="scientific">Citrobacter koseri (strain ATCC BAA-895 / CDC 4225-83 / SGSC4696)</name>
    <dbReference type="NCBI Taxonomy" id="290338"/>
    <lineage>
        <taxon>Bacteria</taxon>
        <taxon>Pseudomonadati</taxon>
        <taxon>Pseudomonadota</taxon>
        <taxon>Gammaproteobacteria</taxon>
        <taxon>Enterobacterales</taxon>
        <taxon>Enterobacteriaceae</taxon>
        <taxon>Citrobacter</taxon>
    </lineage>
</organism>
<name>CYSC_CITK8</name>
<comment type="function">
    <text evidence="1">Catalyzes the synthesis of activated sulfate.</text>
</comment>
<comment type="catalytic activity">
    <reaction evidence="1">
        <text>adenosine 5'-phosphosulfate + ATP = 3'-phosphoadenylyl sulfate + ADP + H(+)</text>
        <dbReference type="Rhea" id="RHEA:24152"/>
        <dbReference type="ChEBI" id="CHEBI:15378"/>
        <dbReference type="ChEBI" id="CHEBI:30616"/>
        <dbReference type="ChEBI" id="CHEBI:58243"/>
        <dbReference type="ChEBI" id="CHEBI:58339"/>
        <dbReference type="ChEBI" id="CHEBI:456216"/>
        <dbReference type="EC" id="2.7.1.25"/>
    </reaction>
</comment>
<comment type="pathway">
    <text evidence="1">Sulfur metabolism; hydrogen sulfide biosynthesis; sulfite from sulfate: step 2/3.</text>
</comment>
<comment type="similarity">
    <text evidence="1">Belongs to the APS kinase family.</text>
</comment>
<sequence>MALHDENVVWHAHAVTREDREALHGHKGAVVWFTGLSGSGKSTIAGALEEALHKLGISTWLLDGDNVRHGLCSDLGFSDADRKENIRRVGEVANLMVDAGLVVLTAFISPHRAERQMVRERIGEGRFIEVFVDTPLATCEARDPKGLYKKARAGELRNFTGIDSVYETPESPEVHLDGEQLVTNLVAQLLDLLRQGDIIRS</sequence>
<accession>A8ANW4</accession>
<evidence type="ECO:0000255" key="1">
    <source>
        <dbReference type="HAMAP-Rule" id="MF_00065"/>
    </source>
</evidence>
<gene>
    <name evidence="1" type="primary">cysC</name>
    <name type="ordered locus">CKO_04111</name>
</gene>